<accession>U6BLZ9</accession>
<feature type="signal peptide" evidence="5">
    <location>
        <begin position="1"/>
        <end position="26"/>
    </location>
</feature>
<feature type="chain" id="PRO_0000426724" description="Alpha-L-arabinofuranosidase B">
    <location>
        <begin position="27"/>
        <end position="463"/>
    </location>
</feature>
<feature type="region of interest" description="Catalytic" evidence="1">
    <location>
        <begin position="27"/>
        <end position="308"/>
    </location>
</feature>
<feature type="region of interest" description="ABD" evidence="1">
    <location>
        <begin position="309"/>
        <end position="463"/>
    </location>
</feature>
<feature type="active site" description="Nucleophile" evidence="1">
    <location>
        <position position="229"/>
    </location>
</feature>
<feature type="binding site" evidence="2">
    <location>
        <position position="227"/>
    </location>
    <ligand>
        <name>substrate</name>
    </ligand>
</feature>
<feature type="binding site" evidence="2">
    <location>
        <position position="230"/>
    </location>
    <ligand>
        <name>substrate</name>
    </ligand>
</feature>
<feature type="binding site" evidence="2">
    <location>
        <position position="304"/>
    </location>
    <ligand>
        <name>substrate</name>
    </ligand>
</feature>
<feature type="binding site" evidence="2">
    <location>
        <position position="381"/>
    </location>
    <ligand>
        <name>substrate</name>
    </ligand>
</feature>
<feature type="binding site" evidence="2">
    <location>
        <position position="383"/>
    </location>
    <ligand>
        <name>substrate</name>
    </ligand>
</feature>
<feature type="binding site" evidence="2">
    <location>
        <position position="384"/>
    </location>
    <ligand>
        <name>substrate</name>
    </ligand>
</feature>
<feature type="binding site" evidence="2">
    <location>
        <position position="428"/>
    </location>
    <ligand>
        <name>substrate</name>
    </ligand>
</feature>
<feature type="binding site" evidence="2">
    <location>
        <position position="430"/>
    </location>
    <ligand>
        <name>substrate</name>
    </ligand>
</feature>
<feature type="binding site" evidence="2">
    <location>
        <position position="433"/>
    </location>
    <ligand>
        <name>substrate</name>
    </ligand>
</feature>
<feature type="binding site" evidence="2">
    <location>
        <position position="453"/>
    </location>
    <ligand>
        <name>substrate</name>
    </ligand>
</feature>
<feature type="site" description="Cis-peptide bond" evidence="2">
    <location>
        <begin position="184"/>
        <end position="185"/>
    </location>
</feature>
<feature type="glycosylation site" description="N-linked (GlcNAc...) asparagine" evidence="3">
    <location>
        <position position="81"/>
    </location>
</feature>
<feature type="glycosylation site" description="N-linked (GlcNAc...) asparagine" evidence="5">
    <location>
        <position position="280"/>
    </location>
</feature>
<feature type="glycosylation site" description="N-linked (GlcNAc...) asparagine" evidence="3">
    <location>
        <position position="332"/>
    </location>
</feature>
<feature type="disulfide bond" evidence="2">
    <location>
        <begin position="29"/>
        <end position="39"/>
    </location>
</feature>
<feature type="disulfide bond" evidence="2">
    <location>
        <begin position="89"/>
        <end position="94"/>
    </location>
</feature>
<feature type="disulfide bond" evidence="2">
    <location>
        <begin position="184"/>
        <end position="185"/>
    </location>
</feature>
<feature type="disulfide bond" evidence="2">
    <location>
        <begin position="366"/>
        <end position="404"/>
    </location>
</feature>
<gene>
    <name type="primary">abfB</name>
    <name type="synonym">Abf54A</name>
</gene>
<dbReference type="EC" id="3.2.1.55"/>
<dbReference type="EMBL" id="KF478992">
    <property type="protein sequence ID" value="AHA36630.1"/>
    <property type="molecule type" value="mRNA"/>
</dbReference>
<dbReference type="SMR" id="U6BLZ9"/>
<dbReference type="CAZy" id="CBM42">
    <property type="family name" value="Carbohydrate-Binding Module Family 42"/>
</dbReference>
<dbReference type="CAZy" id="GH54">
    <property type="family name" value="Glycoside Hydrolase Family 54"/>
</dbReference>
<dbReference type="GlyCosmos" id="U6BLZ9">
    <property type="glycosylation" value="3 sites, No reported glycans"/>
</dbReference>
<dbReference type="iPTMnet" id="U6BLZ9"/>
<dbReference type="UniPathway" id="UPA00667"/>
<dbReference type="GO" id="GO:0005576">
    <property type="term" value="C:extracellular region"/>
    <property type="evidence" value="ECO:0007669"/>
    <property type="project" value="UniProtKB-SubCell"/>
</dbReference>
<dbReference type="GO" id="GO:0046556">
    <property type="term" value="F:alpha-L-arabinofuranosidase activity"/>
    <property type="evidence" value="ECO:0007669"/>
    <property type="project" value="UniProtKB-EC"/>
</dbReference>
<dbReference type="GO" id="GO:0031222">
    <property type="term" value="P:arabinan catabolic process"/>
    <property type="evidence" value="ECO:0007669"/>
    <property type="project" value="UniProtKB-UniPathway"/>
</dbReference>
<dbReference type="GO" id="GO:0046373">
    <property type="term" value="P:L-arabinose metabolic process"/>
    <property type="evidence" value="ECO:0007669"/>
    <property type="project" value="InterPro"/>
</dbReference>
<dbReference type="GO" id="GO:0045490">
    <property type="term" value="P:pectin catabolic process"/>
    <property type="evidence" value="ECO:0007669"/>
    <property type="project" value="TreeGrafter"/>
</dbReference>
<dbReference type="GO" id="GO:0045493">
    <property type="term" value="P:xylan catabolic process"/>
    <property type="evidence" value="ECO:0007669"/>
    <property type="project" value="UniProtKB-KW"/>
</dbReference>
<dbReference type="CDD" id="cd23399">
    <property type="entry name" value="beta-trefoil_ABD_ABFB"/>
    <property type="match status" value="1"/>
</dbReference>
<dbReference type="FunFam" id="2.60.120.200:FF:000131">
    <property type="entry name" value="Probable alpha-L-arabinofuranosidase B"/>
    <property type="match status" value="1"/>
</dbReference>
<dbReference type="FunFam" id="2.80.10.50:FF:000059">
    <property type="entry name" value="Probable alpha-L-arabinofuranosidase B"/>
    <property type="match status" value="1"/>
</dbReference>
<dbReference type="Gene3D" id="2.60.120.200">
    <property type="match status" value="1"/>
</dbReference>
<dbReference type="Gene3D" id="2.80.10.50">
    <property type="match status" value="1"/>
</dbReference>
<dbReference type="InterPro" id="IPR015289">
    <property type="entry name" value="A-L-arabinofuranosidase_B_cat"/>
</dbReference>
<dbReference type="InterPro" id="IPR038964">
    <property type="entry name" value="ABFB"/>
</dbReference>
<dbReference type="InterPro" id="IPR007934">
    <property type="entry name" value="AbfB_ABD"/>
</dbReference>
<dbReference type="InterPro" id="IPR036195">
    <property type="entry name" value="AbfB_ABD_sf"/>
</dbReference>
<dbReference type="InterPro" id="IPR013320">
    <property type="entry name" value="ConA-like_dom_sf"/>
</dbReference>
<dbReference type="PANTHER" id="PTHR39447">
    <property type="entry name" value="ALPHA-L-ARABINOFURANOSIDASE B"/>
    <property type="match status" value="1"/>
</dbReference>
<dbReference type="PANTHER" id="PTHR39447:SF2">
    <property type="entry name" value="ALPHA-L-ARABINOFURANOSIDASE B"/>
    <property type="match status" value="1"/>
</dbReference>
<dbReference type="Pfam" id="PF05270">
    <property type="entry name" value="AbfB"/>
    <property type="match status" value="1"/>
</dbReference>
<dbReference type="Pfam" id="PF09206">
    <property type="entry name" value="ArabFuran-catal"/>
    <property type="match status" value="1"/>
</dbReference>
<dbReference type="SUPFAM" id="SSF110221">
    <property type="entry name" value="AbfB domain"/>
    <property type="match status" value="1"/>
</dbReference>
<dbReference type="SUPFAM" id="SSF49899">
    <property type="entry name" value="Concanavalin A-like lectins/glucanases"/>
    <property type="match status" value="1"/>
</dbReference>
<comment type="function">
    <text evidence="4">Secreted alpha-L-arabinofuranosidase that actively hydrolyzes p-NP-alpha-L-arabinofuranoside and is specific for furanose configuration of the carbohydrate ring. Also exhibits significant activity against polymeric arabinose-containing substrates such as arabinan and arabinoxylan, a major component of plant hemicellulose.</text>
</comment>
<comment type="catalytic activity">
    <reaction evidence="4">
        <text>Hydrolysis of terminal non-reducing alpha-L-arabinofuranoside residues in alpha-L-arabinosides.</text>
        <dbReference type="EC" id="3.2.1.55"/>
    </reaction>
</comment>
<comment type="biophysicochemical properties">
    <phDependence>
        <text evidence="4">Optimum pH is 4.7.</text>
    </phDependence>
    <temperatureDependence>
        <text evidence="4">Optimum temperature is 70 degrees Celsius. 50 perscent maximal activity is exhibited at 75 degrees Celsius. Reaction time was 10 min.</text>
    </temperatureDependence>
</comment>
<comment type="pathway">
    <text>Glycan metabolism; L-arabinan degradation.</text>
</comment>
<comment type="subcellular location">
    <subcellularLocation>
        <location evidence="4 5">Secreted</location>
    </subcellularLocation>
</comment>
<comment type="domain">
    <text evidence="1">Organized into two domains: an N-terminal catalytic domain and a C-terminal arabinose-binding domain (ABD).</text>
</comment>
<comment type="PTM">
    <text evidence="5">Residue Asn-280 is mannosylated with up to 7 mannose residues.</text>
</comment>
<comment type="similarity">
    <text evidence="6">Belongs to the glycosyl hydrolase 54 family.</text>
</comment>
<organism>
    <name type="scientific">Penicillium canescens</name>
    <dbReference type="NCBI Taxonomy" id="5083"/>
    <lineage>
        <taxon>Eukaryota</taxon>
        <taxon>Fungi</taxon>
        <taxon>Dikarya</taxon>
        <taxon>Ascomycota</taxon>
        <taxon>Pezizomycotina</taxon>
        <taxon>Eurotiomycetes</taxon>
        <taxon>Eurotiomycetidae</taxon>
        <taxon>Eurotiales</taxon>
        <taxon>Aspergillaceae</taxon>
        <taxon>Penicillium</taxon>
    </lineage>
</organism>
<protein>
    <recommendedName>
        <fullName>Alpha-L-arabinofuranosidase B</fullName>
        <shortName>ABF B</shortName>
        <shortName>Arabinosidase B</shortName>
        <ecNumber>3.2.1.55</ecNumber>
    </recommendedName>
    <alternativeName>
        <fullName>Alpha-L-arabinofuranosidase of 60kDa</fullName>
        <shortName>AF-60</shortName>
    </alternativeName>
</protein>
<keyword id="KW-0119">Carbohydrate metabolism</keyword>
<keyword id="KW-1015">Disulfide bond</keyword>
<keyword id="KW-0325">Glycoprotein</keyword>
<keyword id="KW-0326">Glycosidase</keyword>
<keyword id="KW-0378">Hydrolase</keyword>
<keyword id="KW-0624">Polysaccharide degradation</keyword>
<keyword id="KW-0964">Secreted</keyword>
<keyword id="KW-0732">Signal</keyword>
<keyword id="KW-0858">Xylan degradation</keyword>
<name>ABFB_PENCN</name>
<reference key="1">
    <citation type="journal article" date="2013" name="Carbohydr. Res.">
        <title>N-glycosylation patterns in two alpha-l-arabinofuranosidases from Penicillium canescens belonging to the glycoside hydrolase families 51 and 54.</title>
        <authorList>
            <person name="Gusakov A.V."/>
            <person name="Sinitsyna O.A."/>
            <person name="Rozhkova A.M."/>
            <person name="Sinitsyn A.P."/>
        </authorList>
    </citation>
    <scope>NUCLEOTIDE SEQUENCE [MRNA]</scope>
    <scope>SIGNAL SEQUENCE CLEAVAGE SITE</scope>
    <scope>SUBCELLULAR LOCATION</scope>
    <scope>GLYCOSYLATION AT ASN-280</scope>
    <scope>IDENTIFICATION BY MASS SPECTROMETRY</scope>
</reference>
<reference key="2">
    <citation type="journal article" date="2003" name="Biochemistry (Mosc.)">
        <title>Isolation and properties of major components of Penicillium canescens extracellular enzyme complex.</title>
        <authorList>
            <person name="Sinitsyna O.A."/>
            <person name="Bukhtoyarov F.E."/>
            <person name="Gusakov A.V."/>
            <person name="Okunev O.N."/>
            <person name="Bekkarevitch A.O."/>
            <person name="Vinetsky Y.P."/>
            <person name="Sinitsyn A.P."/>
        </authorList>
    </citation>
    <scope>SUBCELLULAR LOCATION</scope>
    <scope>FUNCTION</scope>
    <scope>CATALYTIC ACTIVITY</scope>
    <scope>BIOPHYSICOCHEMICAL PROPERTIES</scope>
</reference>
<sequence length="463" mass="48630">MIPQLNRNYAWAIALGLVARSSLVSAGPCDIYASGGTPCVAAHGTTRALHDSYTGPLYQVKRGSDGATTDIAPRHAGGVANATHQDTFCAGTTCLITIIYDQSGHGNHLSQAPPGHFIGPDSQGYDNLASAIGAPVTLNGQKAYGVFISPGTGYRNNAAKNTATGDEAEGLYAVLDGTHYNNGCCFDYGNAEVSGDDTGNGHMEAIYFGDLTAYGTGSGSGPWIMADLENGLFSGFNAKNNAEDPSLSYRFISAAVKGGPNKWAIRGGNAASGPLSTFYNGSRPNARGYNPMSKEGAIILGIGGHNSKLTVGSSISLRATTLCCTTRYVAHNGSTVNTQVVSSSSSAALKQQASWRVRTGLANSECFSFESVDTPNSFLMHNNFVLLLKSNDGTKALHEAATFCPQLGLNGKGNSIRSWSYPTRYFRHYDNVLYAASNGGVHKFDNPASFNDDVSWVVSASFA</sequence>
<proteinExistence type="evidence at protein level"/>
<evidence type="ECO:0000250" key="1"/>
<evidence type="ECO:0000250" key="2">
    <source>
        <dbReference type="UniProtKB" id="Q8NK89"/>
    </source>
</evidence>
<evidence type="ECO:0000255" key="3"/>
<evidence type="ECO:0000269" key="4">
    <source>
    </source>
</evidence>
<evidence type="ECO:0000269" key="5">
    <source>
    </source>
</evidence>
<evidence type="ECO:0000305" key="6"/>